<comment type="subunit">
    <text evidence="1">Monomer and homodimer.</text>
</comment>
<comment type="subcellular location">
    <subcellularLocation>
        <location evidence="3">Cell membrane</location>
        <topology evidence="3">Single-pass type I membrane protein</topology>
    </subcellularLocation>
</comment>
<comment type="miscellaneous">
    <text>Izumo is the name of a Japanese shrine to marriage.</text>
</comment>
<comment type="similarity">
    <text evidence="3">Belongs to the Izumo family.</text>
</comment>
<dbReference type="EMBL" id="BC147884">
    <property type="protein sequence ID" value="AAI47885.1"/>
    <property type="molecule type" value="mRNA"/>
</dbReference>
<dbReference type="RefSeq" id="NP_001099112.1">
    <property type="nucleotide sequence ID" value="NM_001105642.1"/>
</dbReference>
<dbReference type="SMR" id="A6QL94"/>
<dbReference type="STRING" id="9913.ENSBTAP00000031847"/>
<dbReference type="PaxDb" id="9913-ENSBTAP00000031847"/>
<dbReference type="Ensembl" id="ENSBTAT00000031901.4">
    <property type="protein sequence ID" value="ENSBTAP00000031847.3"/>
    <property type="gene ID" value="ENSBTAG00000023412.4"/>
</dbReference>
<dbReference type="GeneID" id="786878"/>
<dbReference type="KEGG" id="bta:786878"/>
<dbReference type="CTD" id="100129669"/>
<dbReference type="VEuPathDB" id="HostDB:ENSBTAG00000023412"/>
<dbReference type="VGNC" id="VGNC:30356">
    <property type="gene designation" value="IZUMO3"/>
</dbReference>
<dbReference type="eggNOG" id="ENOG502S8ID">
    <property type="taxonomic scope" value="Eukaryota"/>
</dbReference>
<dbReference type="GeneTree" id="ENSGT00390000017601"/>
<dbReference type="HOGENOM" id="CLU_103188_0_0_1"/>
<dbReference type="InParanoid" id="A6QL94"/>
<dbReference type="OMA" id="WKGVFLW"/>
<dbReference type="OrthoDB" id="9892356at2759"/>
<dbReference type="TreeFam" id="TF339468"/>
<dbReference type="Reactome" id="R-BTA-1300645">
    <property type="pathway name" value="Acrosome Reaction and Sperm:Oocyte Membrane Binding"/>
</dbReference>
<dbReference type="Proteomes" id="UP000009136">
    <property type="component" value="Chromosome 8"/>
</dbReference>
<dbReference type="Bgee" id="ENSBTAG00000023412">
    <property type="expression patterns" value="Expressed in semen and 9 other cell types or tissues"/>
</dbReference>
<dbReference type="GO" id="GO:0002079">
    <property type="term" value="C:inner acrosomal membrane"/>
    <property type="evidence" value="ECO:0007669"/>
    <property type="project" value="Ensembl"/>
</dbReference>
<dbReference type="GO" id="GO:0005886">
    <property type="term" value="C:plasma membrane"/>
    <property type="evidence" value="ECO:0007669"/>
    <property type="project" value="UniProtKB-SubCell"/>
</dbReference>
<dbReference type="GO" id="GO:0042803">
    <property type="term" value="F:protein homodimerization activity"/>
    <property type="evidence" value="ECO:0000250"/>
    <property type="project" value="UniProtKB"/>
</dbReference>
<dbReference type="GO" id="GO:0001675">
    <property type="term" value="P:acrosome assembly"/>
    <property type="evidence" value="ECO:0007669"/>
    <property type="project" value="Ensembl"/>
</dbReference>
<dbReference type="InterPro" id="IPR029389">
    <property type="entry name" value="IZUMO"/>
</dbReference>
<dbReference type="PANTHER" id="PTHR36470">
    <property type="entry name" value="IZUMO SPERM-EGG FUSION PROTEIN 3"/>
    <property type="match status" value="1"/>
</dbReference>
<dbReference type="PANTHER" id="PTHR36470:SF1">
    <property type="entry name" value="IZUMO SPERM-EGG FUSION PROTEIN 3"/>
    <property type="match status" value="1"/>
</dbReference>
<dbReference type="Pfam" id="PF15005">
    <property type="entry name" value="IZUMO"/>
    <property type="match status" value="1"/>
</dbReference>
<gene>
    <name type="primary">IZUMO3</name>
</gene>
<proteinExistence type="evidence at transcript level"/>
<protein>
    <recommendedName>
        <fullName>Izumo sperm-egg fusion protein 3</fullName>
    </recommendedName>
</protein>
<name>IZUM3_BOVIN</name>
<sequence length="240" mass="27841">MGDLWLLLLLPLSLAAFHGVKGCLECDPKFIEEVKSLLGKLVPPEVPGRTHMLERQMKEMIRLSFKVSHRDKMLRVLAVQKVVDLRTWLKIELDKLSKEKWKGVFILQGRLLDIRKNLDSKLEKLLKKFSEVACSEDCVVTEGPILDCWTCLRITSRCFRGEYCEEDDPKKAESREIGLFLILLAEGVILGGVLLLFHFCISHQRKMKAIRRSLKTYLEKKLEELMGIKDEKEKDFRGRE</sequence>
<reference key="1">
    <citation type="submission" date="2007-06" db="EMBL/GenBank/DDBJ databases">
        <authorList>
            <consortium name="NIH - Mammalian Gene Collection (MGC) project"/>
        </authorList>
    </citation>
    <scope>NUCLEOTIDE SEQUENCE [LARGE SCALE MRNA]</scope>
    <source>
        <strain>Crossbred X Angus</strain>
        <tissue>Liver</tissue>
    </source>
</reference>
<accession>A6QL94</accession>
<evidence type="ECO:0000250" key="1"/>
<evidence type="ECO:0000255" key="2"/>
<evidence type="ECO:0000305" key="3"/>
<keyword id="KW-1003">Cell membrane</keyword>
<keyword id="KW-0472">Membrane</keyword>
<keyword id="KW-1185">Reference proteome</keyword>
<keyword id="KW-0732">Signal</keyword>
<keyword id="KW-0812">Transmembrane</keyword>
<keyword id="KW-1133">Transmembrane helix</keyword>
<feature type="signal peptide" evidence="2">
    <location>
        <begin position="1"/>
        <end position="22"/>
    </location>
</feature>
<feature type="chain" id="PRO_0000342456" description="Izumo sperm-egg fusion protein 3">
    <location>
        <begin position="23"/>
        <end position="240"/>
    </location>
</feature>
<feature type="topological domain" description="Extracellular" evidence="2">
    <location>
        <begin position="23"/>
        <end position="176"/>
    </location>
</feature>
<feature type="transmembrane region" description="Helical" evidence="2">
    <location>
        <begin position="177"/>
        <end position="197"/>
    </location>
</feature>
<feature type="topological domain" description="Cytoplasmic" evidence="2">
    <location>
        <begin position="198"/>
        <end position="240"/>
    </location>
</feature>
<organism>
    <name type="scientific">Bos taurus</name>
    <name type="common">Bovine</name>
    <dbReference type="NCBI Taxonomy" id="9913"/>
    <lineage>
        <taxon>Eukaryota</taxon>
        <taxon>Metazoa</taxon>
        <taxon>Chordata</taxon>
        <taxon>Craniata</taxon>
        <taxon>Vertebrata</taxon>
        <taxon>Euteleostomi</taxon>
        <taxon>Mammalia</taxon>
        <taxon>Eutheria</taxon>
        <taxon>Laurasiatheria</taxon>
        <taxon>Artiodactyla</taxon>
        <taxon>Ruminantia</taxon>
        <taxon>Pecora</taxon>
        <taxon>Bovidae</taxon>
        <taxon>Bovinae</taxon>
        <taxon>Bos</taxon>
    </lineage>
</organism>